<dbReference type="EMBL" id="CP000088">
    <property type="protein sequence ID" value="AAZ56214.1"/>
    <property type="molecule type" value="Genomic_DNA"/>
</dbReference>
<dbReference type="RefSeq" id="WP_011292604.1">
    <property type="nucleotide sequence ID" value="NC_007333.1"/>
</dbReference>
<dbReference type="SMR" id="Q47MV5"/>
<dbReference type="STRING" id="269800.Tfu_2181"/>
<dbReference type="KEGG" id="tfu:Tfu_2181"/>
<dbReference type="eggNOG" id="COG0211">
    <property type="taxonomic scope" value="Bacteria"/>
</dbReference>
<dbReference type="HOGENOM" id="CLU_095424_4_0_11"/>
<dbReference type="OrthoDB" id="9803474at2"/>
<dbReference type="GO" id="GO:0022625">
    <property type="term" value="C:cytosolic large ribosomal subunit"/>
    <property type="evidence" value="ECO:0007669"/>
    <property type="project" value="TreeGrafter"/>
</dbReference>
<dbReference type="GO" id="GO:0003735">
    <property type="term" value="F:structural constituent of ribosome"/>
    <property type="evidence" value="ECO:0007669"/>
    <property type="project" value="InterPro"/>
</dbReference>
<dbReference type="GO" id="GO:0006412">
    <property type="term" value="P:translation"/>
    <property type="evidence" value="ECO:0007669"/>
    <property type="project" value="UniProtKB-UniRule"/>
</dbReference>
<dbReference type="FunFam" id="2.40.50.100:FF:000020">
    <property type="entry name" value="50S ribosomal protein L27"/>
    <property type="match status" value="1"/>
</dbReference>
<dbReference type="Gene3D" id="2.40.50.100">
    <property type="match status" value="1"/>
</dbReference>
<dbReference type="HAMAP" id="MF_00539">
    <property type="entry name" value="Ribosomal_bL27"/>
    <property type="match status" value="1"/>
</dbReference>
<dbReference type="InterPro" id="IPR001684">
    <property type="entry name" value="Ribosomal_bL27"/>
</dbReference>
<dbReference type="InterPro" id="IPR018261">
    <property type="entry name" value="Ribosomal_bL27_CS"/>
</dbReference>
<dbReference type="NCBIfam" id="TIGR00062">
    <property type="entry name" value="L27"/>
    <property type="match status" value="1"/>
</dbReference>
<dbReference type="PANTHER" id="PTHR15893:SF0">
    <property type="entry name" value="LARGE RIBOSOMAL SUBUNIT PROTEIN BL27M"/>
    <property type="match status" value="1"/>
</dbReference>
<dbReference type="PANTHER" id="PTHR15893">
    <property type="entry name" value="RIBOSOMAL PROTEIN L27"/>
    <property type="match status" value="1"/>
</dbReference>
<dbReference type="Pfam" id="PF01016">
    <property type="entry name" value="Ribosomal_L27"/>
    <property type="match status" value="1"/>
</dbReference>
<dbReference type="PRINTS" id="PR00063">
    <property type="entry name" value="RIBOSOMALL27"/>
</dbReference>
<dbReference type="SUPFAM" id="SSF110324">
    <property type="entry name" value="Ribosomal L27 protein-like"/>
    <property type="match status" value="1"/>
</dbReference>
<dbReference type="PROSITE" id="PS00831">
    <property type="entry name" value="RIBOSOMAL_L27"/>
    <property type="match status" value="1"/>
</dbReference>
<evidence type="ECO:0000255" key="1">
    <source>
        <dbReference type="HAMAP-Rule" id="MF_00539"/>
    </source>
</evidence>
<evidence type="ECO:0000256" key="2">
    <source>
        <dbReference type="SAM" id="MobiDB-lite"/>
    </source>
</evidence>
<evidence type="ECO:0000305" key="3"/>
<organism>
    <name type="scientific">Thermobifida fusca (strain YX)</name>
    <dbReference type="NCBI Taxonomy" id="269800"/>
    <lineage>
        <taxon>Bacteria</taxon>
        <taxon>Bacillati</taxon>
        <taxon>Actinomycetota</taxon>
        <taxon>Actinomycetes</taxon>
        <taxon>Streptosporangiales</taxon>
        <taxon>Nocardiopsidaceae</taxon>
        <taxon>Thermobifida</taxon>
    </lineage>
</organism>
<gene>
    <name evidence="1" type="primary">rpmA</name>
    <name type="ordered locus">Tfu_2181</name>
</gene>
<proteinExistence type="inferred from homology"/>
<keyword id="KW-0687">Ribonucleoprotein</keyword>
<keyword id="KW-0689">Ribosomal protein</keyword>
<feature type="chain" id="PRO_1000017637" description="Large ribosomal subunit protein bL27">
    <location>
        <begin position="1"/>
        <end position="88"/>
    </location>
</feature>
<feature type="region of interest" description="Disordered" evidence="2">
    <location>
        <begin position="1"/>
        <end position="21"/>
    </location>
</feature>
<accession>Q47MV5</accession>
<reference key="1">
    <citation type="journal article" date="2007" name="J. Bacteriol.">
        <title>Genome sequence and analysis of the soil cellulolytic actinomycete Thermobifida fusca YX.</title>
        <authorList>
            <person name="Lykidis A."/>
            <person name="Mavromatis K."/>
            <person name="Ivanova N."/>
            <person name="Anderson I."/>
            <person name="Land M."/>
            <person name="DiBartolo G."/>
            <person name="Martinez M."/>
            <person name="Lapidus A."/>
            <person name="Lucas S."/>
            <person name="Copeland A."/>
            <person name="Richardson P."/>
            <person name="Wilson D.B."/>
            <person name="Kyrpides N."/>
        </authorList>
    </citation>
    <scope>NUCLEOTIDE SEQUENCE [LARGE SCALE GENOMIC DNA]</scope>
    <source>
        <strain>YX</strain>
    </source>
</reference>
<comment type="similarity">
    <text evidence="1">Belongs to the bacterial ribosomal protein bL27 family.</text>
</comment>
<name>RL27_THEFY</name>
<sequence>MAHKKGASSSRNGRDSNAKRLGVKRFGGQYVKAGEILVRQRGTRFHPGDNVGRGGDDTLFALVAGRVEFGNLRGRKAVSVIPTPVASE</sequence>
<protein>
    <recommendedName>
        <fullName evidence="1">Large ribosomal subunit protein bL27</fullName>
    </recommendedName>
    <alternativeName>
        <fullName evidence="3">50S ribosomal protein L27</fullName>
    </alternativeName>
</protein>